<name>CH10_CLOAB</name>
<dbReference type="EMBL" id="M74572">
    <property type="protein sequence ID" value="AAA23242.1"/>
    <property type="molecule type" value="Genomic_DNA"/>
</dbReference>
<dbReference type="EMBL" id="AE001437">
    <property type="protein sequence ID" value="AAK80650.1"/>
    <property type="molecule type" value="Genomic_DNA"/>
</dbReference>
<dbReference type="PIR" id="A41872">
    <property type="entry name" value="A41872"/>
</dbReference>
<dbReference type="PIR" id="G97232">
    <property type="entry name" value="G97232"/>
</dbReference>
<dbReference type="RefSeq" id="NP_349310.1">
    <property type="nucleotide sequence ID" value="NC_003030.1"/>
</dbReference>
<dbReference type="RefSeq" id="WP_010965991.1">
    <property type="nucleotide sequence ID" value="NC_003030.1"/>
</dbReference>
<dbReference type="SMR" id="P30719"/>
<dbReference type="STRING" id="272562.CA_C2704"/>
<dbReference type="GeneID" id="44999193"/>
<dbReference type="KEGG" id="cac:CA_C2704"/>
<dbReference type="PATRIC" id="fig|272562.8.peg.2894"/>
<dbReference type="eggNOG" id="COG0234">
    <property type="taxonomic scope" value="Bacteria"/>
</dbReference>
<dbReference type="HOGENOM" id="CLU_132825_2_0_9"/>
<dbReference type="OrthoDB" id="9806791at2"/>
<dbReference type="Proteomes" id="UP000000814">
    <property type="component" value="Chromosome"/>
</dbReference>
<dbReference type="GO" id="GO:0005737">
    <property type="term" value="C:cytoplasm"/>
    <property type="evidence" value="ECO:0007669"/>
    <property type="project" value="UniProtKB-SubCell"/>
</dbReference>
<dbReference type="GO" id="GO:0005524">
    <property type="term" value="F:ATP binding"/>
    <property type="evidence" value="ECO:0007669"/>
    <property type="project" value="InterPro"/>
</dbReference>
<dbReference type="GO" id="GO:0046872">
    <property type="term" value="F:metal ion binding"/>
    <property type="evidence" value="ECO:0007669"/>
    <property type="project" value="TreeGrafter"/>
</dbReference>
<dbReference type="GO" id="GO:0044183">
    <property type="term" value="F:protein folding chaperone"/>
    <property type="evidence" value="ECO:0007669"/>
    <property type="project" value="InterPro"/>
</dbReference>
<dbReference type="GO" id="GO:0051087">
    <property type="term" value="F:protein-folding chaperone binding"/>
    <property type="evidence" value="ECO:0007669"/>
    <property type="project" value="TreeGrafter"/>
</dbReference>
<dbReference type="GO" id="GO:0051082">
    <property type="term" value="F:unfolded protein binding"/>
    <property type="evidence" value="ECO:0007669"/>
    <property type="project" value="TreeGrafter"/>
</dbReference>
<dbReference type="GO" id="GO:0051085">
    <property type="term" value="P:chaperone cofactor-dependent protein refolding"/>
    <property type="evidence" value="ECO:0007669"/>
    <property type="project" value="TreeGrafter"/>
</dbReference>
<dbReference type="CDD" id="cd00320">
    <property type="entry name" value="cpn10"/>
    <property type="match status" value="1"/>
</dbReference>
<dbReference type="FunFam" id="2.30.33.40:FF:000001">
    <property type="entry name" value="10 kDa chaperonin"/>
    <property type="match status" value="1"/>
</dbReference>
<dbReference type="Gene3D" id="2.30.33.40">
    <property type="entry name" value="GroES chaperonin"/>
    <property type="match status" value="1"/>
</dbReference>
<dbReference type="HAMAP" id="MF_00580">
    <property type="entry name" value="CH10"/>
    <property type="match status" value="1"/>
</dbReference>
<dbReference type="InterPro" id="IPR020818">
    <property type="entry name" value="Chaperonin_GroES"/>
</dbReference>
<dbReference type="InterPro" id="IPR037124">
    <property type="entry name" value="Chaperonin_GroES_sf"/>
</dbReference>
<dbReference type="InterPro" id="IPR018369">
    <property type="entry name" value="Chaprnonin_Cpn10_CS"/>
</dbReference>
<dbReference type="InterPro" id="IPR011032">
    <property type="entry name" value="GroES-like_sf"/>
</dbReference>
<dbReference type="NCBIfam" id="NF001527">
    <property type="entry name" value="PRK00364.1-2"/>
    <property type="match status" value="1"/>
</dbReference>
<dbReference type="NCBIfam" id="NF001531">
    <property type="entry name" value="PRK00364.2-2"/>
    <property type="match status" value="1"/>
</dbReference>
<dbReference type="NCBIfam" id="NF001533">
    <property type="entry name" value="PRK00364.2-4"/>
    <property type="match status" value="1"/>
</dbReference>
<dbReference type="NCBIfam" id="NF001534">
    <property type="entry name" value="PRK00364.2-5"/>
    <property type="match status" value="1"/>
</dbReference>
<dbReference type="PANTHER" id="PTHR10772">
    <property type="entry name" value="10 KDA HEAT SHOCK PROTEIN"/>
    <property type="match status" value="1"/>
</dbReference>
<dbReference type="PANTHER" id="PTHR10772:SF58">
    <property type="entry name" value="CO-CHAPERONIN GROES"/>
    <property type="match status" value="1"/>
</dbReference>
<dbReference type="Pfam" id="PF00166">
    <property type="entry name" value="Cpn10"/>
    <property type="match status" value="1"/>
</dbReference>
<dbReference type="PRINTS" id="PR00297">
    <property type="entry name" value="CHAPERONIN10"/>
</dbReference>
<dbReference type="SMART" id="SM00883">
    <property type="entry name" value="Cpn10"/>
    <property type="match status" value="1"/>
</dbReference>
<dbReference type="SUPFAM" id="SSF50129">
    <property type="entry name" value="GroES-like"/>
    <property type="match status" value="1"/>
</dbReference>
<dbReference type="PROSITE" id="PS00681">
    <property type="entry name" value="CHAPERONINS_CPN10"/>
    <property type="match status" value="1"/>
</dbReference>
<comment type="function">
    <text evidence="1">Together with the chaperonin GroEL, plays an essential role in assisting protein folding. The GroEL-GroES system forms a nano-cage that allows encapsulation of the non-native substrate proteins and provides a physical environment optimized to promote and accelerate protein folding. GroES binds to the apical surface of the GroEL ring, thereby capping the opening of the GroEL channel.</text>
</comment>
<comment type="subunit">
    <text evidence="1">Heptamer of 7 subunits arranged in a ring. Interacts with the chaperonin GroEL.</text>
</comment>
<comment type="subcellular location">
    <subcellularLocation>
        <location evidence="1">Cytoplasm</location>
    </subcellularLocation>
</comment>
<comment type="similarity">
    <text evidence="1 2">Belongs to the GroES chaperonin family.</text>
</comment>
<protein>
    <recommendedName>
        <fullName evidence="1">Co-chaperonin GroES</fullName>
    </recommendedName>
    <alternativeName>
        <fullName evidence="1">10 kDa chaperonin</fullName>
    </alternativeName>
    <alternativeName>
        <fullName evidence="1">Chaperonin-10</fullName>
        <shortName evidence="1">Cpn10</shortName>
    </alternativeName>
</protein>
<sequence>MKIRPLGDRVVIKRLEAEETTKSGIVLPSSAKEKPQMAEVVAVGPGGVVDGKEIQMQVKTGDKVFFSKYSGTEIKVDNEELLILRQDDILGIVEE</sequence>
<accession>P30719</accession>
<organism>
    <name type="scientific">Clostridium acetobutylicum (strain ATCC 824 / DSM 792 / JCM 1419 / IAM 19013 / LMG 5710 / NBRC 13948 / NRRL B-527 / VKM B-1787 / 2291 / W)</name>
    <dbReference type="NCBI Taxonomy" id="272562"/>
    <lineage>
        <taxon>Bacteria</taxon>
        <taxon>Bacillati</taxon>
        <taxon>Bacillota</taxon>
        <taxon>Clostridia</taxon>
        <taxon>Eubacteriales</taxon>
        <taxon>Clostridiaceae</taxon>
        <taxon>Clostridium</taxon>
    </lineage>
</organism>
<reference key="1">
    <citation type="journal article" date="1992" name="J. Bacteriol.">
        <title>Cloning, sequencing, and molecular analysis of the groESL operon of Clostridium acetobutylicum.</title>
        <authorList>
            <person name="Narberhaus F."/>
            <person name="Bahl H."/>
        </authorList>
    </citation>
    <scope>NUCLEOTIDE SEQUENCE [GENOMIC DNA]</scope>
    <source>
        <strain>ATCC 4259 / DSM 1731 / NCIB 619</strain>
    </source>
</reference>
<reference key="2">
    <citation type="journal article" date="2001" name="J. Bacteriol.">
        <title>Genome sequence and comparative analysis of the solvent-producing bacterium Clostridium acetobutylicum.</title>
        <authorList>
            <person name="Noelling J."/>
            <person name="Breton G."/>
            <person name="Omelchenko M.V."/>
            <person name="Makarova K.S."/>
            <person name="Zeng Q."/>
            <person name="Gibson R."/>
            <person name="Lee H.M."/>
            <person name="Dubois J."/>
            <person name="Qiu D."/>
            <person name="Hitti J."/>
            <person name="Wolf Y.I."/>
            <person name="Tatusov R.L."/>
            <person name="Sabathe F."/>
            <person name="Doucette-Stamm L.A."/>
            <person name="Soucaille P."/>
            <person name="Daly M.J."/>
            <person name="Bennett G.N."/>
            <person name="Koonin E.V."/>
            <person name="Smith D.R."/>
        </authorList>
    </citation>
    <scope>NUCLEOTIDE SEQUENCE [LARGE SCALE GENOMIC DNA]</scope>
    <source>
        <strain>ATCC 824 / DSM 792 / JCM 1419 / IAM 19013 / LMG 5710 / NBRC 13948 / NRRL B-527 / VKM B-1787 / 2291 / W</strain>
    </source>
</reference>
<keyword id="KW-0143">Chaperone</keyword>
<keyword id="KW-0963">Cytoplasm</keyword>
<keyword id="KW-1185">Reference proteome</keyword>
<feature type="chain" id="PRO_0000174734" description="Co-chaperonin GroES">
    <location>
        <begin position="1"/>
        <end position="95"/>
    </location>
</feature>
<proteinExistence type="inferred from homology"/>
<gene>
    <name evidence="1" type="primary">groES</name>
    <name evidence="1" type="synonym">groS</name>
    <name type="ordered locus">CA_C2704</name>
</gene>
<evidence type="ECO:0000255" key="1">
    <source>
        <dbReference type="HAMAP-Rule" id="MF_00580"/>
    </source>
</evidence>
<evidence type="ECO:0000305" key="2"/>